<reference key="1">
    <citation type="submission" date="2005-06" db="EMBL/GenBank/DDBJ databases">
        <title>DNA sequences of macaque genes expressed in brain or testis and its evolutionary implications.</title>
        <authorList>
            <consortium name="International consortium for macaque cDNA sequencing and analysis"/>
        </authorList>
    </citation>
    <scope>NUCLEOTIDE SEQUENCE [LARGE SCALE MRNA]</scope>
    <source>
        <tissue>Temporal cortex</tissue>
    </source>
</reference>
<feature type="chain" id="PRO_0000249850" description="Methylsterol monooxygenase 1">
    <location>
        <begin position="1"/>
        <end position="293"/>
    </location>
</feature>
<feature type="transmembrane region" description="Helical" evidence="3">
    <location>
        <begin position="55"/>
        <end position="75"/>
    </location>
</feature>
<feature type="transmembrane region" description="Helical" evidence="3">
    <location>
        <begin position="100"/>
        <end position="120"/>
    </location>
</feature>
<feature type="transmembrane region" description="Helical" evidence="3">
    <location>
        <begin position="199"/>
        <end position="219"/>
    </location>
</feature>
<feature type="domain" description="Fatty acid hydroxylase" evidence="3">
    <location>
        <begin position="145"/>
        <end position="274"/>
    </location>
</feature>
<feature type="short sequence motif" description="Histidine box-1">
    <location>
        <begin position="157"/>
        <end position="161"/>
    </location>
</feature>
<feature type="short sequence motif" description="Histidine box-2">
    <location>
        <begin position="170"/>
        <end position="174"/>
    </location>
</feature>
<feature type="short sequence motif" description="Histidine box-3">
    <location>
        <begin position="249"/>
        <end position="255"/>
    </location>
</feature>
<keyword id="KW-0152">Cholesterol biosynthesis</keyword>
<keyword id="KW-0153">Cholesterol metabolism</keyword>
<keyword id="KW-0256">Endoplasmic reticulum</keyword>
<keyword id="KW-0408">Iron</keyword>
<keyword id="KW-0444">Lipid biosynthesis</keyword>
<keyword id="KW-0443">Lipid metabolism</keyword>
<keyword id="KW-0472">Membrane</keyword>
<keyword id="KW-0520">NAD</keyword>
<keyword id="KW-0560">Oxidoreductase</keyword>
<keyword id="KW-1185">Reference proteome</keyword>
<keyword id="KW-0752">Steroid biosynthesis</keyword>
<keyword id="KW-0753">Steroid metabolism</keyword>
<keyword id="KW-0756">Sterol biosynthesis</keyword>
<keyword id="KW-1207">Sterol metabolism</keyword>
<keyword id="KW-0812">Transmembrane</keyword>
<keyword id="KW-1133">Transmembrane helix</keyword>
<keyword id="KW-0832">Ubl conjugation</keyword>
<gene>
    <name type="primary">MSMO1</name>
    <name type="synonym">SC4MOL</name>
    <name type="ORF">QtrA-11285</name>
</gene>
<evidence type="ECO:0000250" key="1">
    <source>
        <dbReference type="UniProtKB" id="O35532"/>
    </source>
</evidence>
<evidence type="ECO:0000250" key="2">
    <source>
        <dbReference type="UniProtKB" id="Q15800"/>
    </source>
</evidence>
<evidence type="ECO:0000255" key="3"/>
<evidence type="ECO:0000305" key="4"/>
<accession>Q4R4Q4</accession>
<organism>
    <name type="scientific">Macaca fascicularis</name>
    <name type="common">Crab-eating macaque</name>
    <name type="synonym">Cynomolgus monkey</name>
    <dbReference type="NCBI Taxonomy" id="9541"/>
    <lineage>
        <taxon>Eukaryota</taxon>
        <taxon>Metazoa</taxon>
        <taxon>Chordata</taxon>
        <taxon>Craniata</taxon>
        <taxon>Vertebrata</taxon>
        <taxon>Euteleostomi</taxon>
        <taxon>Mammalia</taxon>
        <taxon>Eutheria</taxon>
        <taxon>Euarchontoglires</taxon>
        <taxon>Primates</taxon>
        <taxon>Haplorrhini</taxon>
        <taxon>Catarrhini</taxon>
        <taxon>Cercopithecidae</taxon>
        <taxon>Cercopithecinae</taxon>
        <taxon>Macaca</taxon>
    </lineage>
</organism>
<sequence>MATNESVSIFSSASLAVEYVDSLLPENPLQEPFKNAWNYMLNNYTKFQIATWGSLIVHEALYFSFCLPGFLFQFIPYMKKYKIQKDKPETWENQWKCFKVLLFNHFCIQLPLICGTYYFTEYFNIPYDWERMPRWYFLLARCFGCAVIEDTWHYFMHRLLHHKRIYKYIHKVHHEFQAPFGMEAEYAHPLETLILGTGFFIGIVLLCDHVILLWAWVTIRLLETIDVHSGYDIPLNPLNLIPFYAGSRHHDFHHMNFIGNYASTFTWWDRIFGTDSQYHAYYEKKKKFEKKTE</sequence>
<name>MSMO1_MACFA</name>
<comment type="function">
    <text evidence="2">Catalyzes the three-step monooxygenation required for the demethylation of 4,4-dimethyl and 4alpha-methylsterols, which can be subsequently metabolized to cholesterol.</text>
</comment>
<comment type="catalytic activity">
    <reaction evidence="1">
        <text>4,4-dimethyl-5alpha-cholest-7-en-3beta-ol + 6 Fe(II)-[cytochrome b5] + 3 O2 + 5 H(+) = 4alpha-carboxy-4beta-methyl-5alpha-cholest-7-ene-3beta-ol + 6 Fe(III)-[cytochrome b5] + 4 H2O</text>
        <dbReference type="Rhea" id="RHEA:55220"/>
        <dbReference type="Rhea" id="RHEA-COMP:10438"/>
        <dbReference type="Rhea" id="RHEA-COMP:10439"/>
        <dbReference type="ChEBI" id="CHEBI:15377"/>
        <dbReference type="ChEBI" id="CHEBI:15378"/>
        <dbReference type="ChEBI" id="CHEBI:15379"/>
        <dbReference type="ChEBI" id="CHEBI:16455"/>
        <dbReference type="ChEBI" id="CHEBI:29033"/>
        <dbReference type="ChEBI" id="CHEBI:29034"/>
        <dbReference type="ChEBI" id="CHEBI:58387"/>
        <dbReference type="EC" id="1.14.18.9"/>
    </reaction>
    <physiologicalReaction direction="left-to-right" evidence="1">
        <dbReference type="Rhea" id="RHEA:55221"/>
    </physiologicalReaction>
</comment>
<comment type="catalytic activity">
    <reaction evidence="2">
        <text>4,4-dimethyl-5alpha-cholesta-8,24-dien-3beta-ol + 6 Fe(II)-[cytochrome b5] + 3 O2 + 5 H(+) = 4beta-methylzymosterol-4alpha-carboxylate + 6 Fe(III)-[cytochrome b5] + 4 H2O</text>
        <dbReference type="Rhea" id="RHEA:55244"/>
        <dbReference type="Rhea" id="RHEA-COMP:10438"/>
        <dbReference type="Rhea" id="RHEA-COMP:10439"/>
        <dbReference type="ChEBI" id="CHEBI:15377"/>
        <dbReference type="ChEBI" id="CHEBI:15378"/>
        <dbReference type="ChEBI" id="CHEBI:15379"/>
        <dbReference type="ChEBI" id="CHEBI:18364"/>
        <dbReference type="ChEBI" id="CHEBI:29033"/>
        <dbReference type="ChEBI" id="CHEBI:29034"/>
        <dbReference type="ChEBI" id="CHEBI:64925"/>
    </reaction>
    <physiologicalReaction direction="left-to-right" evidence="2">
        <dbReference type="Rhea" id="RHEA:55245"/>
    </physiologicalReaction>
</comment>
<comment type="catalytic activity">
    <reaction evidence="2">
        <text>4alpha-methylzymosterol + 6 Fe(II)-[cytochrome b5] + 3 O2 + 5 H(+) = 4alpha-carboxyzymosterol + 6 Fe(III)-[cytochrome b5] + 4 H2O</text>
        <dbReference type="Rhea" id="RHEA:47056"/>
        <dbReference type="Rhea" id="RHEA-COMP:10438"/>
        <dbReference type="Rhea" id="RHEA-COMP:10439"/>
        <dbReference type="ChEBI" id="CHEBI:1949"/>
        <dbReference type="ChEBI" id="CHEBI:15377"/>
        <dbReference type="ChEBI" id="CHEBI:15378"/>
        <dbReference type="ChEBI" id="CHEBI:15379"/>
        <dbReference type="ChEBI" id="CHEBI:29033"/>
        <dbReference type="ChEBI" id="CHEBI:29034"/>
        <dbReference type="ChEBI" id="CHEBI:143575"/>
    </reaction>
    <physiologicalReaction direction="left-to-right" evidence="2">
        <dbReference type="Rhea" id="RHEA:47057"/>
    </physiologicalReaction>
</comment>
<comment type="catalytic activity">
    <reaction evidence="2">
        <text>4alpha-methyl-5alpha-cholest-7-en-3beta-ol + 6 Fe(II)-[cytochrome b5] + 3 O2 + 5 H(+) = 4alpha-carboxy-5alpha-cholest-7-en-3beta-ol + 6 Fe(III)-[cytochrome b5] + 4 H2O</text>
        <dbReference type="Rhea" id="RHEA:62768"/>
        <dbReference type="Rhea" id="RHEA-COMP:10438"/>
        <dbReference type="Rhea" id="RHEA-COMP:10439"/>
        <dbReference type="ChEBI" id="CHEBI:15377"/>
        <dbReference type="ChEBI" id="CHEBI:15378"/>
        <dbReference type="ChEBI" id="CHEBI:15379"/>
        <dbReference type="ChEBI" id="CHEBI:18378"/>
        <dbReference type="ChEBI" id="CHEBI:29033"/>
        <dbReference type="ChEBI" id="CHEBI:29034"/>
        <dbReference type="ChEBI" id="CHEBI:145943"/>
    </reaction>
    <physiologicalReaction direction="left-to-right" evidence="2">
        <dbReference type="Rhea" id="RHEA:62769"/>
    </physiologicalReaction>
</comment>
<comment type="catalytic activity">
    <reaction evidence="2">
        <text>4,4-dimethyl-5alpha-cholest-8-en-3beta-ol + 6 Fe(II)-[cytochrome b5] + 3 O2 + 5 H(+) = 4alpha-carboxy-4beta-methyl-5alpha-cholest-8-en-3beta-ol + 6 Fe(III)-[cytochrome b5] + 4 H2O</text>
        <dbReference type="Rhea" id="RHEA:62776"/>
        <dbReference type="Rhea" id="RHEA-COMP:10438"/>
        <dbReference type="Rhea" id="RHEA-COMP:10439"/>
        <dbReference type="ChEBI" id="CHEBI:15377"/>
        <dbReference type="ChEBI" id="CHEBI:15378"/>
        <dbReference type="ChEBI" id="CHEBI:15379"/>
        <dbReference type="ChEBI" id="CHEBI:29033"/>
        <dbReference type="ChEBI" id="CHEBI:29034"/>
        <dbReference type="ChEBI" id="CHEBI:87044"/>
        <dbReference type="ChEBI" id="CHEBI:87047"/>
    </reaction>
    <physiologicalReaction direction="left-to-right" evidence="2">
        <dbReference type="Rhea" id="RHEA:62777"/>
    </physiologicalReaction>
</comment>
<comment type="catalytic activity">
    <reaction evidence="2">
        <text>4alpha-methyl-5alpha-cholest-8-en-3beta-ol + 6 Fe(II)-[cytochrome b5] + 3 O2 + 5 H(+) = 4alpha-carboxy-5alpha-cholest-8-ene-3beta-ol + 6 Fe(III)-[cytochrome b5] + 4 H2O</text>
        <dbReference type="Rhea" id="RHEA:62780"/>
        <dbReference type="Rhea" id="RHEA-COMP:10438"/>
        <dbReference type="Rhea" id="RHEA-COMP:10439"/>
        <dbReference type="ChEBI" id="CHEBI:15377"/>
        <dbReference type="ChEBI" id="CHEBI:15378"/>
        <dbReference type="ChEBI" id="CHEBI:15379"/>
        <dbReference type="ChEBI" id="CHEBI:29033"/>
        <dbReference type="ChEBI" id="CHEBI:29034"/>
        <dbReference type="ChEBI" id="CHEBI:87051"/>
        <dbReference type="ChEBI" id="CHEBI:87055"/>
    </reaction>
    <physiologicalReaction direction="left-to-right" evidence="2">
        <dbReference type="Rhea" id="RHEA:62781"/>
    </physiologicalReaction>
</comment>
<comment type="cofactor">
    <cofactor evidence="2">
        <name>Fe cation</name>
        <dbReference type="ChEBI" id="CHEBI:24875"/>
    </cofactor>
</comment>
<comment type="pathway">
    <text evidence="2">Steroid biosynthesis; zymosterol biosynthesis; zymosterol from lanosterol: step 3/6.</text>
</comment>
<comment type="pathway">
    <text evidence="2">Steroid biosynthesis; cholesterol biosynthesis.</text>
</comment>
<comment type="subcellular location">
    <subcellularLocation>
        <location evidence="2">Endoplasmic reticulum membrane</location>
        <topology evidence="2">Multi-pass membrane protein</topology>
    </subcellularLocation>
</comment>
<comment type="domain">
    <text evidence="2">The histidine box domains may contain the active site and/or be involved in metal ion binding.</text>
</comment>
<comment type="PTM">
    <text evidence="2">Ubiquitinated by MARCHF6, leading to proteasomal degradation.</text>
</comment>
<comment type="similarity">
    <text evidence="4">Belongs to the sterol desaturase family.</text>
</comment>
<protein>
    <recommendedName>
        <fullName>Methylsterol monooxygenase 1</fullName>
        <ecNumber evidence="1">1.14.18.9</ecNumber>
    </recommendedName>
    <alternativeName>
        <fullName>C-4 methylsterol oxidase</fullName>
    </alternativeName>
    <alternativeName>
        <fullName>Sterol-C4-methyl oxidase</fullName>
    </alternativeName>
</protein>
<proteinExistence type="evidence at transcript level"/>
<dbReference type="EC" id="1.14.18.9" evidence="1"/>
<dbReference type="EMBL" id="AB169840">
    <property type="protein sequence ID" value="BAE01921.1"/>
    <property type="molecule type" value="mRNA"/>
</dbReference>
<dbReference type="STRING" id="9541.ENSMFAP00000027370"/>
<dbReference type="eggNOG" id="KOG0873">
    <property type="taxonomic scope" value="Eukaryota"/>
</dbReference>
<dbReference type="UniPathway" id="UPA00063"/>
<dbReference type="UniPathway" id="UPA00770">
    <property type="reaction ID" value="UER00756"/>
</dbReference>
<dbReference type="Proteomes" id="UP000233100">
    <property type="component" value="Unplaced"/>
</dbReference>
<dbReference type="GO" id="GO:0005789">
    <property type="term" value="C:endoplasmic reticulum membrane"/>
    <property type="evidence" value="ECO:0007669"/>
    <property type="project" value="UniProtKB-SubCell"/>
</dbReference>
<dbReference type="GO" id="GO:0000254">
    <property type="term" value="F:C-4 methylsterol oxidase activity"/>
    <property type="evidence" value="ECO:0007669"/>
    <property type="project" value="UniProtKB-EC"/>
</dbReference>
<dbReference type="GO" id="GO:0005506">
    <property type="term" value="F:iron ion binding"/>
    <property type="evidence" value="ECO:0007669"/>
    <property type="project" value="InterPro"/>
</dbReference>
<dbReference type="GO" id="GO:0006695">
    <property type="term" value="P:cholesterol biosynthetic process"/>
    <property type="evidence" value="ECO:0007669"/>
    <property type="project" value="UniProtKB-UniPathway"/>
</dbReference>
<dbReference type="InterPro" id="IPR006694">
    <property type="entry name" value="Fatty_acid_hydroxylase"/>
</dbReference>
<dbReference type="InterPro" id="IPR050307">
    <property type="entry name" value="Sterol_Desaturase_Related"/>
</dbReference>
<dbReference type="PANTHER" id="PTHR11863">
    <property type="entry name" value="STEROL DESATURASE"/>
    <property type="match status" value="1"/>
</dbReference>
<dbReference type="Pfam" id="PF04116">
    <property type="entry name" value="FA_hydroxylase"/>
    <property type="match status" value="1"/>
</dbReference>